<evidence type="ECO:0000250" key="1">
    <source>
        <dbReference type="UniProtKB" id="Q6DD88"/>
    </source>
</evidence>
<evidence type="ECO:0000250" key="2">
    <source>
        <dbReference type="UniProtKB" id="Q6PST4"/>
    </source>
</evidence>
<evidence type="ECO:0000250" key="3">
    <source>
        <dbReference type="UniProtKB" id="Q8BH66"/>
    </source>
</evidence>
<evidence type="ECO:0000250" key="4">
    <source>
        <dbReference type="UniProtKB" id="Q8WXF7"/>
    </source>
</evidence>
<evidence type="ECO:0000255" key="5"/>
<evidence type="ECO:0000255" key="6">
    <source>
        <dbReference type="PROSITE-ProRule" id="PRU01052"/>
    </source>
</evidence>
<evidence type="ECO:0000256" key="7">
    <source>
        <dbReference type="SAM" id="MobiDB-lite"/>
    </source>
</evidence>
<evidence type="ECO:0000305" key="8"/>
<reference key="1">
    <citation type="journal article" date="2005" name="BMC Genomics">
        <title>Characterization of 954 bovine full-CDS cDNA sequences.</title>
        <authorList>
            <person name="Harhay G.P."/>
            <person name="Sonstegard T.S."/>
            <person name="Keele J.W."/>
            <person name="Heaton M.P."/>
            <person name="Clawson M.L."/>
            <person name="Snelling W.M."/>
            <person name="Wiedmann R.T."/>
            <person name="Van Tassell C.P."/>
            <person name="Smith T.P.L."/>
        </authorList>
    </citation>
    <scope>NUCLEOTIDE SEQUENCE [LARGE SCALE MRNA]</scope>
</reference>
<reference key="2">
    <citation type="submission" date="2005-08" db="EMBL/GenBank/DDBJ databases">
        <authorList>
            <consortium name="NIH - Mammalian Gene Collection (MGC) project"/>
        </authorList>
    </citation>
    <scope>NUCLEOTIDE SEQUENCE [LARGE SCALE MRNA]</scope>
    <source>
        <strain>Hereford</strain>
        <tissue>Hypothalamus</tissue>
    </source>
</reference>
<comment type="function">
    <text evidence="2 4">Atlastin-1 (ATL1) is a membrane-anchored GTPase that mediates the GTP-dependent fusion of endoplasmic reticulum (ER) membranes, maintaining the continuous ER network. It facilitates the formation of three-way junctions where ER tubules intersect. Two atlastin-1 on neighboring ER tubules bind GTP and form loose homodimers through the GB1/RHD3-type G domains and 3HB regions. Upon GTP hydrolysis, the 3HB regions tighten, pulling the membranes together to drive their fusion. After fusion, the homodimer disassembles upon release of inorganic phosphate (Pi). Subsequently, GDP dissociates, resetting the monomers to a conformation ready for a new fusion cycle. May also regulate more or less directly Golgi biogenesis (By similarity). Indirectly regulates axonal development (By similarity).</text>
</comment>
<comment type="catalytic activity">
    <reaction evidence="4">
        <text>GTP + H2O = GDP + phosphate + H(+)</text>
        <dbReference type="Rhea" id="RHEA:19669"/>
        <dbReference type="ChEBI" id="CHEBI:15377"/>
        <dbReference type="ChEBI" id="CHEBI:15378"/>
        <dbReference type="ChEBI" id="CHEBI:37565"/>
        <dbReference type="ChEBI" id="CHEBI:43474"/>
        <dbReference type="ChEBI" id="CHEBI:58189"/>
    </reaction>
    <physiologicalReaction direction="left-to-right" evidence="4">
        <dbReference type="Rhea" id="RHEA:19670"/>
    </physiologicalReaction>
</comment>
<comment type="subunit">
    <text evidence="2 4">Monomeric and homodimeric. The homodimer, transiently formed by two molecules on opposing membranes, is the active form mediating ER membrane fusion. Interacts with REEP1, REEP5, RTN3 and RTN4 (via the transmembrane region); these proteins are involved in endoplasmic reticulum tubular network organization. Interacts with ZFYVE27; both proteins are involved in endoplasmic reticulum tubular network organization (By similarity). Interacts with ARL6IP1; both proteins are involved in endoplasmic reticulum tubular network organization (By similarity). Interacts with SPAST; the interaction is direct, could recruit SPAST to Golgi membranes. Interacts (via N-terminal region) with MAP4K4 (via CNH regulatory domain). May interact with TMED2. Interacts with CPT1C (By similarity).</text>
</comment>
<comment type="subcellular location">
    <subcellularLocation>
        <location evidence="4">Endoplasmic reticulum membrane</location>
        <topology evidence="4">Multi-pass membrane protein</topology>
    </subcellularLocation>
    <subcellularLocation>
        <location evidence="4">Golgi apparatus membrane</location>
        <topology evidence="4">Multi-pass membrane protein</topology>
    </subcellularLocation>
    <subcellularLocation>
        <location evidence="2">Cell projection</location>
        <location evidence="2">Axon</location>
    </subcellularLocation>
    <text evidence="4">Localizes to endoplasmic reticulum tubular network.</text>
</comment>
<comment type="domain">
    <text evidence="4">The N-terminal hypervariable region (HVR) regulates ATL1-mediated membrane tethering by organizing ATL1 into a lattice structure on the same membrane. It does not affect GTP hydrolysis or membrane fusion. It has no effect on the GTP hydrolysis and fusion steps.</text>
</comment>
<comment type="domain">
    <text evidence="4">The GB1/RHD3-type G domain mediates GTP-binding and hydrolysis as well as homodimerization.</text>
</comment>
<comment type="domain">
    <text evidence="4">The two three-helix bundle (3HB) regions in the homodimer are loosely associated initially, but they tighten upon GTP hydrolysis, facilitating the fusion of membranes.</text>
</comment>
<comment type="domain">
    <text evidence="4">The C-terminal autoinhibitory domain negatively regulates the GTPase-dependent fusogenic activity without affecting GTP-binding.</text>
</comment>
<comment type="PTM">
    <text evidence="4">Phosphorylated. Phosphorylation, by different kinases, of the N-terminal hypervariable region (HVR) regulates the ATL1-mediated membrane tethering step.</text>
</comment>
<comment type="similarity">
    <text evidence="6">Belongs to the TRAFAC class dynamin-like GTPase superfamily. GB1/RHD3 GTPase family. GB1 subfamily.</text>
</comment>
<gene>
    <name evidence="4" type="primary">ATL1</name>
</gene>
<name>ATLA1_BOVIN</name>
<keyword id="KW-0007">Acetylation</keyword>
<keyword id="KW-0966">Cell projection</keyword>
<keyword id="KW-0175">Coiled coil</keyword>
<keyword id="KW-0256">Endoplasmic reticulum</keyword>
<keyword id="KW-0333">Golgi apparatus</keyword>
<keyword id="KW-0342">GTP-binding</keyword>
<keyword id="KW-0378">Hydrolase</keyword>
<keyword id="KW-0460">Magnesium</keyword>
<keyword id="KW-0472">Membrane</keyword>
<keyword id="KW-0479">Metal-binding</keyword>
<keyword id="KW-0547">Nucleotide-binding</keyword>
<keyword id="KW-0597">Phosphoprotein</keyword>
<keyword id="KW-1185">Reference proteome</keyword>
<keyword id="KW-0812">Transmembrane</keyword>
<keyword id="KW-1133">Transmembrane helix</keyword>
<organism>
    <name type="scientific">Bos taurus</name>
    <name type="common">Bovine</name>
    <dbReference type="NCBI Taxonomy" id="9913"/>
    <lineage>
        <taxon>Eukaryota</taxon>
        <taxon>Metazoa</taxon>
        <taxon>Chordata</taxon>
        <taxon>Craniata</taxon>
        <taxon>Vertebrata</taxon>
        <taxon>Euteleostomi</taxon>
        <taxon>Mammalia</taxon>
        <taxon>Eutheria</taxon>
        <taxon>Laurasiatheria</taxon>
        <taxon>Artiodactyla</taxon>
        <taxon>Ruminantia</taxon>
        <taxon>Pecora</taxon>
        <taxon>Bovidae</taxon>
        <taxon>Bovinae</taxon>
        <taxon>Bos</taxon>
    </lineage>
</organism>
<dbReference type="EC" id="3.6.5.-" evidence="4"/>
<dbReference type="EMBL" id="BT021725">
    <property type="protein sequence ID" value="AAX46572.1"/>
    <property type="molecule type" value="mRNA"/>
</dbReference>
<dbReference type="EMBL" id="BC103448">
    <property type="protein sequence ID" value="AAI03449.1"/>
    <property type="molecule type" value="mRNA"/>
</dbReference>
<dbReference type="RefSeq" id="NP_001029803.1">
    <property type="nucleotide sequence ID" value="NM_001034631.2"/>
</dbReference>
<dbReference type="RefSeq" id="XP_005211757.1">
    <property type="nucleotide sequence ID" value="XM_005211700.3"/>
</dbReference>
<dbReference type="SMR" id="Q58D72"/>
<dbReference type="FunCoup" id="Q58D72">
    <property type="interactions" value="2574"/>
</dbReference>
<dbReference type="STRING" id="9913.ENSBTAP00000019032"/>
<dbReference type="PaxDb" id="9913-ENSBTAP00000019032"/>
<dbReference type="Ensembl" id="ENSBTAT00000019032.5">
    <property type="protein sequence ID" value="ENSBTAP00000019032.3"/>
    <property type="gene ID" value="ENSBTAG00000014312.5"/>
</dbReference>
<dbReference type="GeneID" id="535424"/>
<dbReference type="KEGG" id="bta:535424"/>
<dbReference type="CTD" id="51062"/>
<dbReference type="VEuPathDB" id="HostDB:ENSBTAG00000014312"/>
<dbReference type="VGNC" id="VGNC:26265">
    <property type="gene designation" value="ATL1"/>
</dbReference>
<dbReference type="eggNOG" id="KOG2037">
    <property type="taxonomic scope" value="Eukaryota"/>
</dbReference>
<dbReference type="GeneTree" id="ENSGT00940000158704"/>
<dbReference type="HOGENOM" id="CLU_021447_2_0_1"/>
<dbReference type="InParanoid" id="Q58D72"/>
<dbReference type="OMA" id="GFIHNIW"/>
<dbReference type="OrthoDB" id="7788754at2759"/>
<dbReference type="TreeFam" id="TF105251"/>
<dbReference type="Proteomes" id="UP000009136">
    <property type="component" value="Chromosome 10"/>
</dbReference>
<dbReference type="Bgee" id="ENSBTAG00000014312">
    <property type="expression patterns" value="Expressed in occipital lobe and 78 other cell types or tissues"/>
</dbReference>
<dbReference type="GO" id="GO:0030424">
    <property type="term" value="C:axon"/>
    <property type="evidence" value="ECO:0007669"/>
    <property type="project" value="UniProtKB-SubCell"/>
</dbReference>
<dbReference type="GO" id="GO:0005783">
    <property type="term" value="C:endoplasmic reticulum"/>
    <property type="evidence" value="ECO:0000250"/>
    <property type="project" value="UniProtKB"/>
</dbReference>
<dbReference type="GO" id="GO:0005789">
    <property type="term" value="C:endoplasmic reticulum membrane"/>
    <property type="evidence" value="ECO:0000250"/>
    <property type="project" value="UniProtKB"/>
</dbReference>
<dbReference type="GO" id="GO:0071782">
    <property type="term" value="C:endoplasmic reticulum tubular network"/>
    <property type="evidence" value="ECO:0000250"/>
    <property type="project" value="UniProtKB"/>
</dbReference>
<dbReference type="GO" id="GO:0098826">
    <property type="term" value="C:endoplasmic reticulum tubular network membrane"/>
    <property type="evidence" value="ECO:0000250"/>
    <property type="project" value="UniProtKB"/>
</dbReference>
<dbReference type="GO" id="GO:0005794">
    <property type="term" value="C:Golgi apparatus"/>
    <property type="evidence" value="ECO:0000250"/>
    <property type="project" value="UniProtKB"/>
</dbReference>
<dbReference type="GO" id="GO:1990674">
    <property type="term" value="C:Golgi cis cisterna membrane"/>
    <property type="evidence" value="ECO:0000250"/>
    <property type="project" value="UniProtKB"/>
</dbReference>
<dbReference type="GO" id="GO:0000139">
    <property type="term" value="C:Golgi membrane"/>
    <property type="evidence" value="ECO:0007669"/>
    <property type="project" value="UniProtKB-SubCell"/>
</dbReference>
<dbReference type="GO" id="GO:0005525">
    <property type="term" value="F:GTP binding"/>
    <property type="evidence" value="ECO:0000250"/>
    <property type="project" value="UniProtKB"/>
</dbReference>
<dbReference type="GO" id="GO:0003924">
    <property type="term" value="F:GTPase activity"/>
    <property type="evidence" value="ECO:0000318"/>
    <property type="project" value="GO_Central"/>
</dbReference>
<dbReference type="GO" id="GO:0140523">
    <property type="term" value="F:GTPase-dependent fusogenic activity"/>
    <property type="evidence" value="ECO:0000250"/>
    <property type="project" value="UniProtKB"/>
</dbReference>
<dbReference type="GO" id="GO:0042802">
    <property type="term" value="F:identical protein binding"/>
    <property type="evidence" value="ECO:0000250"/>
    <property type="project" value="UniProtKB"/>
</dbReference>
<dbReference type="GO" id="GO:0007409">
    <property type="term" value="P:axonogenesis"/>
    <property type="evidence" value="ECO:0000250"/>
    <property type="project" value="UniProtKB"/>
</dbReference>
<dbReference type="GO" id="GO:0016320">
    <property type="term" value="P:endoplasmic reticulum membrane fusion"/>
    <property type="evidence" value="ECO:0000250"/>
    <property type="project" value="UniProtKB"/>
</dbReference>
<dbReference type="GO" id="GO:0007029">
    <property type="term" value="P:endoplasmic reticulum organization"/>
    <property type="evidence" value="ECO:0000318"/>
    <property type="project" value="GO_Central"/>
</dbReference>
<dbReference type="GO" id="GO:1990809">
    <property type="term" value="P:endoplasmic reticulum tubular network membrane organization"/>
    <property type="evidence" value="ECO:0000250"/>
    <property type="project" value="UniProtKB"/>
</dbReference>
<dbReference type="GO" id="GO:0051260">
    <property type="term" value="P:protein homooligomerization"/>
    <property type="evidence" value="ECO:0000318"/>
    <property type="project" value="GO_Central"/>
</dbReference>
<dbReference type="CDD" id="cd01851">
    <property type="entry name" value="GBP"/>
    <property type="match status" value="1"/>
</dbReference>
<dbReference type="FunFam" id="1.20.58.420:FF:000001">
    <property type="entry name" value="Atlastin-1 isoform 1"/>
    <property type="match status" value="1"/>
</dbReference>
<dbReference type="FunFam" id="3.40.50.300:FF:000497">
    <property type="entry name" value="Atlastin-1 isoform 1"/>
    <property type="match status" value="1"/>
</dbReference>
<dbReference type="Gene3D" id="1.20.58.420">
    <property type="entry name" value="AHSP"/>
    <property type="match status" value="1"/>
</dbReference>
<dbReference type="Gene3D" id="3.40.50.300">
    <property type="entry name" value="P-loop containing nucleotide triphosphate hydrolases"/>
    <property type="match status" value="1"/>
</dbReference>
<dbReference type="InterPro" id="IPR030386">
    <property type="entry name" value="G_GB1_RHD3_dom"/>
</dbReference>
<dbReference type="InterPro" id="IPR036543">
    <property type="entry name" value="Guanylate-bd_C_sf"/>
</dbReference>
<dbReference type="InterPro" id="IPR015894">
    <property type="entry name" value="Guanylate-bd_N"/>
</dbReference>
<dbReference type="InterPro" id="IPR027417">
    <property type="entry name" value="P-loop_NTPase"/>
</dbReference>
<dbReference type="PANTHER" id="PTHR10751">
    <property type="entry name" value="GUANYLATE BINDING PROTEIN"/>
    <property type="match status" value="1"/>
</dbReference>
<dbReference type="Pfam" id="PF02263">
    <property type="entry name" value="GBP"/>
    <property type="match status" value="1"/>
</dbReference>
<dbReference type="SUPFAM" id="SSF48340">
    <property type="entry name" value="Interferon-induced guanylate-binding protein 1 (GBP1), C-terminal domain"/>
    <property type="match status" value="1"/>
</dbReference>
<dbReference type="SUPFAM" id="SSF52540">
    <property type="entry name" value="P-loop containing nucleoside triphosphate hydrolases"/>
    <property type="match status" value="1"/>
</dbReference>
<dbReference type="PROSITE" id="PS51715">
    <property type="entry name" value="G_GB1_RHD3"/>
    <property type="match status" value="1"/>
</dbReference>
<protein>
    <recommendedName>
        <fullName evidence="4">Atlastin-1</fullName>
        <ecNumber evidence="4">3.6.5.-</ecNumber>
    </recommendedName>
</protein>
<sequence length="558" mass="63534">MAKNRRDRNSWGGFSEKTYEWSSEEEEPVKKAGPVQVLVVKDDHSFELDETALNRILLSEAVRDKEVVAVSVAGAFRKGKSFLMDFMLRYMYNQESVDWVGDHNEPLTGFSWRGGSERETTGIQIWSEIFLINKPDGKKVAVLLMDTQGTFDSQSTLRDSATVFALSTMISSIQVYNLSQNVQEDDLQHLQLFTEYGRLAMEETFLKPFQSLIFLVRDWSFPYEFSYGSDGGSKFLEKRLKVSGNQHEELQNVRKHIHSCFTKISCFLLPHPGLKVATNPNFDGKLKEIDDEFIKNLKILIPWLLSPESLDIKEINGNKITCRGLVEYFKAYIKIYQGEELPHPKSMLQATAEANNLAAVATAKDTYNKKMEEICGGDKPFLAPNDLQTKHLELKEESVKLFRGVKKMGGEEFSRRYLQQLETEIDELYIQYIKHNDSKNIFHAARTPATLFVVIFITYVIAGVTGFIGLDIIASLCNMIMGLTLITLCTWAYIRYSGEYRELGAVIDQVAAALWDQGSTNEALYKLYSAAATHRHLYHQAFPAPKSESTEQSEKKKM</sequence>
<accession>Q58D72</accession>
<accession>Q3ZBC1</accession>
<feature type="chain" id="PRO_0000238933" description="Atlastin-1">
    <location>
        <begin position="1"/>
        <end position="558"/>
    </location>
</feature>
<feature type="topological domain" description="Cytoplasmic" evidence="4">
    <location>
        <begin position="1"/>
        <end position="449"/>
    </location>
</feature>
<feature type="transmembrane region" description="Helical" evidence="5">
    <location>
        <begin position="450"/>
        <end position="470"/>
    </location>
</feature>
<feature type="topological domain" description="Lumenal" evidence="4">
    <location>
        <position position="471"/>
    </location>
</feature>
<feature type="transmembrane region" description="Helical" evidence="5">
    <location>
        <begin position="472"/>
        <end position="492"/>
    </location>
</feature>
<feature type="topological domain" description="Cytoplasmic" evidence="4">
    <location>
        <begin position="493"/>
        <end position="558"/>
    </location>
</feature>
<feature type="domain" description="GB1/RHD3-type G" evidence="6">
    <location>
        <begin position="64"/>
        <end position="309"/>
    </location>
</feature>
<feature type="region of interest" description="N-terminal hypervariable region (HVR)" evidence="4">
    <location>
        <begin position="1"/>
        <end position="34"/>
    </location>
</feature>
<feature type="region of interest" description="Disordered" evidence="7">
    <location>
        <begin position="1"/>
        <end position="28"/>
    </location>
</feature>
<feature type="region of interest" description="3HB (three-helix bundle) domain" evidence="4">
    <location>
        <begin position="347"/>
        <end position="438"/>
    </location>
</feature>
<feature type="region of interest" description="Linker" evidence="4">
    <location>
        <begin position="439"/>
        <end position="447"/>
    </location>
</feature>
<feature type="region of interest" description="Autoinhibitory domain" evidence="4">
    <location>
        <begin position="521"/>
        <end position="558"/>
    </location>
</feature>
<feature type="coiled-coil region" evidence="5">
    <location>
        <begin position="418"/>
        <end position="439"/>
    </location>
</feature>
<feature type="binding site" evidence="4">
    <location>
        <position position="77"/>
    </location>
    <ligand>
        <name>GDP</name>
        <dbReference type="ChEBI" id="CHEBI:58189"/>
    </ligand>
</feature>
<feature type="binding site" evidence="4">
    <location>
        <position position="77"/>
    </location>
    <ligand>
        <name>GTP</name>
        <dbReference type="ChEBI" id="CHEBI:37565"/>
    </ligand>
</feature>
<feature type="binding site" evidence="4">
    <location>
        <position position="78"/>
    </location>
    <ligand>
        <name>GDP</name>
        <dbReference type="ChEBI" id="CHEBI:58189"/>
    </ligand>
</feature>
<feature type="binding site" evidence="4">
    <location>
        <position position="78"/>
    </location>
    <ligand>
        <name>GTP</name>
        <dbReference type="ChEBI" id="CHEBI:37565"/>
    </ligand>
</feature>
<feature type="binding site" evidence="4">
    <location>
        <position position="79"/>
    </location>
    <ligand>
        <name>GDP</name>
        <dbReference type="ChEBI" id="CHEBI:58189"/>
    </ligand>
</feature>
<feature type="binding site" evidence="4">
    <location>
        <position position="79"/>
    </location>
    <ligand>
        <name>GTP</name>
        <dbReference type="ChEBI" id="CHEBI:37565"/>
    </ligand>
</feature>
<feature type="binding site" evidence="4">
    <location>
        <position position="80"/>
    </location>
    <ligand>
        <name>GDP</name>
        <dbReference type="ChEBI" id="CHEBI:58189"/>
    </ligand>
</feature>
<feature type="binding site" evidence="4">
    <location>
        <position position="80"/>
    </location>
    <ligand>
        <name>GTP</name>
        <dbReference type="ChEBI" id="CHEBI:37565"/>
    </ligand>
</feature>
<feature type="binding site" evidence="4">
    <location>
        <position position="81"/>
    </location>
    <ligand>
        <name>GDP</name>
        <dbReference type="ChEBI" id="CHEBI:58189"/>
    </ligand>
</feature>
<feature type="binding site" evidence="4">
    <location>
        <position position="81"/>
    </location>
    <ligand>
        <name>GTP</name>
        <dbReference type="ChEBI" id="CHEBI:37565"/>
    </ligand>
</feature>
<feature type="binding site" evidence="4">
    <location>
        <position position="81"/>
    </location>
    <ligand>
        <name>Mg(2+)</name>
        <dbReference type="ChEBI" id="CHEBI:18420"/>
    </ligand>
</feature>
<feature type="binding site" evidence="4">
    <location>
        <position position="82"/>
    </location>
    <ligand>
        <name>GDP</name>
        <dbReference type="ChEBI" id="CHEBI:58189"/>
    </ligand>
</feature>
<feature type="binding site" evidence="4">
    <location>
        <position position="82"/>
    </location>
    <ligand>
        <name>GTP</name>
        <dbReference type="ChEBI" id="CHEBI:37565"/>
    </ligand>
</feature>
<feature type="binding site" evidence="4">
    <location>
        <position position="148"/>
    </location>
    <ligand>
        <name>GDP</name>
        <dbReference type="ChEBI" id="CHEBI:58189"/>
    </ligand>
</feature>
<feature type="binding site" evidence="4">
    <location>
        <position position="217"/>
    </location>
    <ligand>
        <name>GDP</name>
        <dbReference type="ChEBI" id="CHEBI:58189"/>
    </ligand>
</feature>
<feature type="binding site" evidence="4">
    <location>
        <position position="217"/>
    </location>
    <ligand>
        <name>GTP</name>
        <dbReference type="ChEBI" id="CHEBI:37565"/>
    </ligand>
</feature>
<feature type="binding site" evidence="4">
    <location>
        <position position="218"/>
    </location>
    <ligand>
        <name>GDP</name>
        <dbReference type="ChEBI" id="CHEBI:58189"/>
    </ligand>
</feature>
<feature type="binding site" evidence="4">
    <location>
        <position position="218"/>
    </location>
    <ligand>
        <name>GTP</name>
        <dbReference type="ChEBI" id="CHEBI:37565"/>
    </ligand>
</feature>
<feature type="binding site" evidence="4">
    <location>
        <position position="276"/>
    </location>
    <ligand>
        <name>GDP</name>
        <dbReference type="ChEBI" id="CHEBI:58189"/>
    </ligand>
</feature>
<feature type="binding site" evidence="4">
    <location>
        <position position="276"/>
    </location>
    <ligand>
        <name>GTP</name>
        <dbReference type="ChEBI" id="CHEBI:37565"/>
    </ligand>
</feature>
<feature type="binding site" evidence="4">
    <location>
        <position position="279"/>
    </location>
    <ligand>
        <name>GDP</name>
        <dbReference type="ChEBI" id="CHEBI:58189"/>
    </ligand>
</feature>
<feature type="modified residue" description="Phosphoserine" evidence="3">
    <location>
        <position position="10"/>
    </location>
</feature>
<feature type="modified residue" description="Phosphoserine" evidence="3">
    <location>
        <position position="22"/>
    </location>
</feature>
<feature type="modified residue" description="Phosphoserine" evidence="3">
    <location>
        <position position="23"/>
    </location>
</feature>
<feature type="modified residue" description="N6-acetyllysine" evidence="1">
    <location>
        <position position="395"/>
    </location>
</feature>
<feature type="sequence conflict" description="In Ref. 1; AAX46572." evidence="8" ref="1">
    <original>NRR</original>
    <variation>SRK</variation>
    <location>
        <begin position="4"/>
        <end position="6"/>
    </location>
</feature>
<feature type="sequence conflict" description="In Ref. 1; AAX46572." evidence="8" ref="1">
    <original>T</original>
    <variation>G</variation>
    <location>
        <position position="18"/>
    </location>
</feature>
<feature type="sequence conflict" description="In Ref. 1; AAX46572." evidence="8" ref="1">
    <original>P</original>
    <variation>S</variation>
    <location>
        <position position="28"/>
    </location>
</feature>
<feature type="sequence conflict" description="In Ref. 1; AAX46572." evidence="8" ref="1">
    <original>V</original>
    <variation>I</variation>
    <location>
        <position position="39"/>
    </location>
</feature>
<feature type="sequence conflict" description="In Ref. 1; AAX46572." evidence="8" ref="1">
    <original>H</original>
    <variation>Y</variation>
    <location>
        <position position="103"/>
    </location>
</feature>
<feature type="sequence conflict" description="In Ref. 1; AAX46572." evidence="8" ref="1">
    <original>I</original>
    <variation>V</variation>
    <location>
        <position position="129"/>
    </location>
</feature>
<feature type="sequence conflict" description="In Ref. 1; AAX46572." evidence="8" ref="1">
    <original>S</original>
    <variation>A</variation>
    <location>
        <position position="229"/>
    </location>
</feature>
<feature type="sequence conflict" description="In Ref. 1; AAX46572." evidence="8" ref="1">
    <original>D</original>
    <variation>E</variation>
    <location>
        <position position="291"/>
    </location>
</feature>
<feature type="sequence conflict" description="In Ref. 1; AAX46572." evidence="8" ref="1">
    <original>A</original>
    <variation>S</variation>
    <location>
        <position position="358"/>
    </location>
</feature>
<feature type="sequence conflict" description="In Ref. 1; AAX46572." evidence="8" ref="1">
    <original>S</original>
    <variation>I</variation>
    <location>
        <position position="414"/>
    </location>
</feature>
<feature type="sequence conflict" description="In Ref. 1; AAX46572." evidence="8" ref="1">
    <original>T</original>
    <variation>S</variation>
    <location>
        <position position="423"/>
    </location>
</feature>
<feature type="sequence conflict" description="In Ref. 1; AAX46572." evidence="8" ref="1">
    <original>M</original>
    <variation>I</variation>
    <location>
        <position position="558"/>
    </location>
</feature>
<proteinExistence type="evidence at transcript level"/>